<sequence length="1141" mass="126613">MAASRSASRISFAKIIEPLEVPDLLALQTQSFDWLIGNDIWAERVQEAIDADRNDVPITSGLEEVFEEISPIEDFSGSMSLSFRDHRFEPPKYSVEECKDKDMTYSAPLFVTAEFTNNTTGEIKSQTVFMGDFPLMTPKGTFVINGTERVVVSQLVRSPGVYFEKAIDKASDKDLFSCKVIPSRGAWLEFEIDKRDTVGVRIDRKRRQSVTVLLKALGWDEARILERFGDFPSMRVTLEKDHTSSQDDALLDIYRKLRPGEPPTRESAQTLLENLFFNPKRYDLAKVGRYKVNKKLTLEVAHDVGVLTEDDVVRTIEYIVKLHAGQDPDNYEVDDIDHFGNRRLRTVGELIQNQVRLGLARMERVVRERMTTQDVEAITPQTLINIRPVVASIKEFFGTSQLSQFMDQTNPLAGLTHKRRLSALGPGGLSRERAGFEVRDVHPSHYGRMCPIETPEGPNIGLIGSLSTFARVNPFGFVETPYRKVENGRVTGQIDYLTADEEDRHVKAQANTPLNADGTFAEDRVLVRRKGGEVEFIPPDEVDYMDVSPRQMVSVATAMIPFLEHDDANRALMGSNMQRQSVPLLRSEAPLVGTGMEARAAKDAGDVVVCAQSGVVEDLSADYITVMHDDGTRRTYRLAKFRRSNQGTCINQKPIVFEGDRVEAGQVIADGPCTDNGEMALGKNLLVAFMPWEGHNYEDAIILSQRLVQDDVLSSIHIEEHEVDARDTKLGPEEITRDIPNVAEEVLADLDERGIIRIGAEVSPGDVLVGKVTPKGETELTPEERLLRAIFGEKAREVRDTSLKVPHGESGKVIGVRVFSREDGDELPPGVNELVRVYVAQKRKITDGDKLAGRHGNKGVIAKILPVEDMPFLPDGTAVDVVLNPHGVPRRMNIGQILETHLGWVAKTGWQVDSGAEGWKERLRGIGADAAPPGTNVATPVFDGAREEEITGLLDATLPNRDGQQMIGSSGKAELYDGRTGEPYPYPVAVGYIYILKLLHLVDDKIHARSTGPYSMITQQPLGGKAQFGGQRFGEMEVWALEAYGAAYALQELLTIKSDDVVGRVKVYEAIVKGENIPEPGIPESFKVLIKEMQSLCLNVEVLSSDGVSIEMRDTDEDVFRAAEELGIDLSRREPSSVEEV</sequence>
<reference key="1">
    <citation type="journal article" date="2007" name="Genome Res.">
        <title>Genome characteristics of facultatively symbiotic Frankia sp. strains reflect host range and host plant biogeography.</title>
        <authorList>
            <person name="Normand P."/>
            <person name="Lapierre P."/>
            <person name="Tisa L.S."/>
            <person name="Gogarten J.P."/>
            <person name="Alloisio N."/>
            <person name="Bagnarol E."/>
            <person name="Bassi C.A."/>
            <person name="Berry A.M."/>
            <person name="Bickhart D.M."/>
            <person name="Choisne N."/>
            <person name="Couloux A."/>
            <person name="Cournoyer B."/>
            <person name="Cruveiller S."/>
            <person name="Daubin V."/>
            <person name="Demange N."/>
            <person name="Francino M.P."/>
            <person name="Goltsman E."/>
            <person name="Huang Y."/>
            <person name="Kopp O.R."/>
            <person name="Labarre L."/>
            <person name="Lapidus A."/>
            <person name="Lavire C."/>
            <person name="Marechal J."/>
            <person name="Martinez M."/>
            <person name="Mastronunzio J.E."/>
            <person name="Mullin B.C."/>
            <person name="Niemann J."/>
            <person name="Pujic P."/>
            <person name="Rawnsley T."/>
            <person name="Rouy Z."/>
            <person name="Schenowitz C."/>
            <person name="Sellstedt A."/>
            <person name="Tavares F."/>
            <person name="Tomkins J.P."/>
            <person name="Vallenet D."/>
            <person name="Valverde C."/>
            <person name="Wall L.G."/>
            <person name="Wang Y."/>
            <person name="Medigue C."/>
            <person name="Benson D.R."/>
        </authorList>
    </citation>
    <scope>NUCLEOTIDE SEQUENCE [LARGE SCALE GENOMIC DNA]</scope>
    <source>
        <strain>EAN1pec</strain>
    </source>
</reference>
<evidence type="ECO:0000255" key="1">
    <source>
        <dbReference type="HAMAP-Rule" id="MF_01321"/>
    </source>
</evidence>
<organism>
    <name type="scientific">Parafrankia sp. (strain EAN1pec)</name>
    <dbReference type="NCBI Taxonomy" id="298653"/>
    <lineage>
        <taxon>Bacteria</taxon>
        <taxon>Bacillati</taxon>
        <taxon>Actinomycetota</taxon>
        <taxon>Actinomycetes</taxon>
        <taxon>Frankiales</taxon>
        <taxon>Frankiaceae</taxon>
        <taxon>Parafrankia</taxon>
    </lineage>
</organism>
<protein>
    <recommendedName>
        <fullName evidence="1">DNA-directed RNA polymerase subunit beta</fullName>
        <shortName evidence="1">RNAP subunit beta</shortName>
        <ecNumber evidence="1">2.7.7.6</ecNumber>
    </recommendedName>
    <alternativeName>
        <fullName evidence="1">RNA polymerase subunit beta</fullName>
    </alternativeName>
    <alternativeName>
        <fullName evidence="1">Transcriptase subunit beta</fullName>
    </alternativeName>
</protein>
<accession>A8LC64</accession>
<feature type="chain" id="PRO_1000141697" description="DNA-directed RNA polymerase subunit beta">
    <location>
        <begin position="1"/>
        <end position="1141"/>
    </location>
</feature>
<comment type="function">
    <text evidence="1">DNA-dependent RNA polymerase catalyzes the transcription of DNA into RNA using the four ribonucleoside triphosphates as substrates.</text>
</comment>
<comment type="catalytic activity">
    <reaction evidence="1">
        <text>RNA(n) + a ribonucleoside 5'-triphosphate = RNA(n+1) + diphosphate</text>
        <dbReference type="Rhea" id="RHEA:21248"/>
        <dbReference type="Rhea" id="RHEA-COMP:14527"/>
        <dbReference type="Rhea" id="RHEA-COMP:17342"/>
        <dbReference type="ChEBI" id="CHEBI:33019"/>
        <dbReference type="ChEBI" id="CHEBI:61557"/>
        <dbReference type="ChEBI" id="CHEBI:140395"/>
        <dbReference type="EC" id="2.7.7.6"/>
    </reaction>
</comment>
<comment type="subunit">
    <text evidence="1">The RNAP catalytic core consists of 2 alpha, 1 beta, 1 beta' and 1 omega subunit. When a sigma factor is associated with the core the holoenzyme is formed, which can initiate transcription.</text>
</comment>
<comment type="similarity">
    <text evidence="1">Belongs to the RNA polymerase beta chain family.</text>
</comment>
<proteinExistence type="inferred from homology"/>
<keyword id="KW-0240">DNA-directed RNA polymerase</keyword>
<keyword id="KW-0548">Nucleotidyltransferase</keyword>
<keyword id="KW-0804">Transcription</keyword>
<keyword id="KW-0808">Transferase</keyword>
<dbReference type="EC" id="2.7.7.6" evidence="1"/>
<dbReference type="EMBL" id="CP000820">
    <property type="protein sequence ID" value="ABW15401.1"/>
    <property type="molecule type" value="Genomic_DNA"/>
</dbReference>
<dbReference type="RefSeq" id="WP_020463484.1">
    <property type="nucleotide sequence ID" value="NC_009921.1"/>
</dbReference>
<dbReference type="SMR" id="A8LC64"/>
<dbReference type="STRING" id="298653.Franean1_6057"/>
<dbReference type="KEGG" id="fre:Franean1_6057"/>
<dbReference type="eggNOG" id="COG0085">
    <property type="taxonomic scope" value="Bacteria"/>
</dbReference>
<dbReference type="HOGENOM" id="CLU_000524_4_1_11"/>
<dbReference type="GO" id="GO:0000428">
    <property type="term" value="C:DNA-directed RNA polymerase complex"/>
    <property type="evidence" value="ECO:0007669"/>
    <property type="project" value="UniProtKB-KW"/>
</dbReference>
<dbReference type="GO" id="GO:0003677">
    <property type="term" value="F:DNA binding"/>
    <property type="evidence" value="ECO:0007669"/>
    <property type="project" value="UniProtKB-UniRule"/>
</dbReference>
<dbReference type="GO" id="GO:0003899">
    <property type="term" value="F:DNA-directed RNA polymerase activity"/>
    <property type="evidence" value="ECO:0007669"/>
    <property type="project" value="UniProtKB-UniRule"/>
</dbReference>
<dbReference type="GO" id="GO:0032549">
    <property type="term" value="F:ribonucleoside binding"/>
    <property type="evidence" value="ECO:0007669"/>
    <property type="project" value="InterPro"/>
</dbReference>
<dbReference type="GO" id="GO:0006351">
    <property type="term" value="P:DNA-templated transcription"/>
    <property type="evidence" value="ECO:0007669"/>
    <property type="project" value="UniProtKB-UniRule"/>
</dbReference>
<dbReference type="CDD" id="cd00653">
    <property type="entry name" value="RNA_pol_B_RPB2"/>
    <property type="match status" value="1"/>
</dbReference>
<dbReference type="FunFam" id="3.90.1800.10:FF:000001">
    <property type="entry name" value="DNA-directed RNA polymerase subunit beta"/>
    <property type="match status" value="1"/>
</dbReference>
<dbReference type="Gene3D" id="2.40.50.100">
    <property type="match status" value="1"/>
</dbReference>
<dbReference type="Gene3D" id="2.40.50.150">
    <property type="match status" value="1"/>
</dbReference>
<dbReference type="Gene3D" id="3.90.1100.10">
    <property type="match status" value="1"/>
</dbReference>
<dbReference type="Gene3D" id="2.30.150.10">
    <property type="entry name" value="DNA-directed RNA polymerase, beta subunit, external 1 domain"/>
    <property type="match status" value="1"/>
</dbReference>
<dbReference type="Gene3D" id="2.40.270.10">
    <property type="entry name" value="DNA-directed RNA polymerase, subunit 2, domain 6"/>
    <property type="match status" value="1"/>
</dbReference>
<dbReference type="Gene3D" id="3.90.1800.10">
    <property type="entry name" value="RNA polymerase alpha subunit dimerisation domain"/>
    <property type="match status" value="1"/>
</dbReference>
<dbReference type="Gene3D" id="3.90.1110.10">
    <property type="entry name" value="RNA polymerase Rpb2, domain 2"/>
    <property type="match status" value="1"/>
</dbReference>
<dbReference type="HAMAP" id="MF_01321">
    <property type="entry name" value="RNApol_bact_RpoB"/>
    <property type="match status" value="1"/>
</dbReference>
<dbReference type="InterPro" id="IPR042107">
    <property type="entry name" value="DNA-dir_RNA_pol_bsu_ext_1_sf"/>
</dbReference>
<dbReference type="InterPro" id="IPR019462">
    <property type="entry name" value="DNA-dir_RNA_pol_bsu_external_1"/>
</dbReference>
<dbReference type="InterPro" id="IPR015712">
    <property type="entry name" value="DNA-dir_RNA_pol_su2"/>
</dbReference>
<dbReference type="InterPro" id="IPR007120">
    <property type="entry name" value="DNA-dir_RNAP_su2_dom"/>
</dbReference>
<dbReference type="InterPro" id="IPR037033">
    <property type="entry name" value="DNA-dir_RNAP_su2_hyb_sf"/>
</dbReference>
<dbReference type="InterPro" id="IPR010243">
    <property type="entry name" value="RNA_pol_bsu_bac"/>
</dbReference>
<dbReference type="InterPro" id="IPR007121">
    <property type="entry name" value="RNA_pol_bsu_CS"/>
</dbReference>
<dbReference type="InterPro" id="IPR007644">
    <property type="entry name" value="RNA_pol_bsu_protrusion"/>
</dbReference>
<dbReference type="InterPro" id="IPR007642">
    <property type="entry name" value="RNA_pol_Rpb2_2"/>
</dbReference>
<dbReference type="InterPro" id="IPR037034">
    <property type="entry name" value="RNA_pol_Rpb2_2_sf"/>
</dbReference>
<dbReference type="InterPro" id="IPR007645">
    <property type="entry name" value="RNA_pol_Rpb2_3"/>
</dbReference>
<dbReference type="InterPro" id="IPR007641">
    <property type="entry name" value="RNA_pol_Rpb2_7"/>
</dbReference>
<dbReference type="InterPro" id="IPR014724">
    <property type="entry name" value="RNA_pol_RPB2_OB-fold"/>
</dbReference>
<dbReference type="NCBIfam" id="NF001616">
    <property type="entry name" value="PRK00405.1"/>
    <property type="match status" value="1"/>
</dbReference>
<dbReference type="NCBIfam" id="TIGR02013">
    <property type="entry name" value="rpoB"/>
    <property type="match status" value="1"/>
</dbReference>
<dbReference type="PANTHER" id="PTHR20856">
    <property type="entry name" value="DNA-DIRECTED RNA POLYMERASE I SUBUNIT 2"/>
    <property type="match status" value="1"/>
</dbReference>
<dbReference type="Pfam" id="PF04563">
    <property type="entry name" value="RNA_pol_Rpb2_1"/>
    <property type="match status" value="1"/>
</dbReference>
<dbReference type="Pfam" id="PF04561">
    <property type="entry name" value="RNA_pol_Rpb2_2"/>
    <property type="match status" value="1"/>
</dbReference>
<dbReference type="Pfam" id="PF04565">
    <property type="entry name" value="RNA_pol_Rpb2_3"/>
    <property type="match status" value="1"/>
</dbReference>
<dbReference type="Pfam" id="PF10385">
    <property type="entry name" value="RNA_pol_Rpb2_45"/>
    <property type="match status" value="1"/>
</dbReference>
<dbReference type="Pfam" id="PF00562">
    <property type="entry name" value="RNA_pol_Rpb2_6"/>
    <property type="match status" value="1"/>
</dbReference>
<dbReference type="Pfam" id="PF04560">
    <property type="entry name" value="RNA_pol_Rpb2_7"/>
    <property type="match status" value="1"/>
</dbReference>
<dbReference type="SUPFAM" id="SSF64484">
    <property type="entry name" value="beta and beta-prime subunits of DNA dependent RNA-polymerase"/>
    <property type="match status" value="1"/>
</dbReference>
<dbReference type="PROSITE" id="PS01166">
    <property type="entry name" value="RNA_POL_BETA"/>
    <property type="match status" value="1"/>
</dbReference>
<name>RPOB_PARS2</name>
<gene>
    <name evidence="1" type="primary">rpoB</name>
    <name type="ordered locus">Franean1_6057</name>
</gene>